<sequence length="98" mass="10772">MNLYDVIKKPVITESSMAQLEAGKYVFEVDTRAHKLLIKQAVEAAFEGVKVANVNTINVKPKAKRVGRYTGFTNKTKKAIITLTADSKAIELFGAEAE</sequence>
<comment type="function">
    <text evidence="1">One of the early assembly proteins it binds 23S rRNA. One of the proteins that surrounds the polypeptide exit tunnel on the outside of the ribosome. Forms the main docking site for trigger factor binding to the ribosome.</text>
</comment>
<comment type="subunit">
    <text evidence="1">Part of the 50S ribosomal subunit. Contacts protein L29, and trigger factor when it is bound to the ribosome.</text>
</comment>
<comment type="similarity">
    <text evidence="1">Belongs to the universal ribosomal protein uL23 family.</text>
</comment>
<gene>
    <name evidence="1" type="primary">rplW</name>
    <name type="ordered locus">SGO_1983</name>
</gene>
<proteinExistence type="inferred from homology"/>
<evidence type="ECO:0000255" key="1">
    <source>
        <dbReference type="HAMAP-Rule" id="MF_01369"/>
    </source>
</evidence>
<evidence type="ECO:0000305" key="2"/>
<dbReference type="EMBL" id="CP000725">
    <property type="protein sequence ID" value="ABV09868.1"/>
    <property type="molecule type" value="Genomic_DNA"/>
</dbReference>
<dbReference type="RefSeq" id="WP_008809908.1">
    <property type="nucleotide sequence ID" value="NC_009785.1"/>
</dbReference>
<dbReference type="SMR" id="A8AZM3"/>
<dbReference type="STRING" id="467705.SGO_1983"/>
<dbReference type="KEGG" id="sgo:SGO_1983"/>
<dbReference type="eggNOG" id="COG0089">
    <property type="taxonomic scope" value="Bacteria"/>
</dbReference>
<dbReference type="HOGENOM" id="CLU_037562_3_2_9"/>
<dbReference type="Proteomes" id="UP000001131">
    <property type="component" value="Chromosome"/>
</dbReference>
<dbReference type="GO" id="GO:1990904">
    <property type="term" value="C:ribonucleoprotein complex"/>
    <property type="evidence" value="ECO:0007669"/>
    <property type="project" value="UniProtKB-KW"/>
</dbReference>
<dbReference type="GO" id="GO:0005840">
    <property type="term" value="C:ribosome"/>
    <property type="evidence" value="ECO:0007669"/>
    <property type="project" value="UniProtKB-KW"/>
</dbReference>
<dbReference type="GO" id="GO:0019843">
    <property type="term" value="F:rRNA binding"/>
    <property type="evidence" value="ECO:0007669"/>
    <property type="project" value="UniProtKB-UniRule"/>
</dbReference>
<dbReference type="GO" id="GO:0003735">
    <property type="term" value="F:structural constituent of ribosome"/>
    <property type="evidence" value="ECO:0007669"/>
    <property type="project" value="InterPro"/>
</dbReference>
<dbReference type="GO" id="GO:0006412">
    <property type="term" value="P:translation"/>
    <property type="evidence" value="ECO:0007669"/>
    <property type="project" value="UniProtKB-UniRule"/>
</dbReference>
<dbReference type="FunFam" id="3.30.70.330:FF:000001">
    <property type="entry name" value="50S ribosomal protein L23"/>
    <property type="match status" value="1"/>
</dbReference>
<dbReference type="Gene3D" id="3.30.70.330">
    <property type="match status" value="1"/>
</dbReference>
<dbReference type="HAMAP" id="MF_01369_B">
    <property type="entry name" value="Ribosomal_uL23_B"/>
    <property type="match status" value="1"/>
</dbReference>
<dbReference type="InterPro" id="IPR012677">
    <property type="entry name" value="Nucleotide-bd_a/b_plait_sf"/>
</dbReference>
<dbReference type="InterPro" id="IPR013025">
    <property type="entry name" value="Ribosomal_uL23-like"/>
</dbReference>
<dbReference type="InterPro" id="IPR012678">
    <property type="entry name" value="Ribosomal_uL23/eL15/eS24_sf"/>
</dbReference>
<dbReference type="InterPro" id="IPR001014">
    <property type="entry name" value="Ribosomal_uL23_CS"/>
</dbReference>
<dbReference type="NCBIfam" id="NF004361">
    <property type="entry name" value="PRK05738.2-1"/>
    <property type="match status" value="1"/>
</dbReference>
<dbReference type="NCBIfam" id="NF004363">
    <property type="entry name" value="PRK05738.2-4"/>
    <property type="match status" value="1"/>
</dbReference>
<dbReference type="PANTHER" id="PTHR11620">
    <property type="entry name" value="60S RIBOSOMAL PROTEIN L23A"/>
    <property type="match status" value="1"/>
</dbReference>
<dbReference type="Pfam" id="PF00276">
    <property type="entry name" value="Ribosomal_L23"/>
    <property type="match status" value="1"/>
</dbReference>
<dbReference type="SUPFAM" id="SSF54189">
    <property type="entry name" value="Ribosomal proteins S24e, L23 and L15e"/>
    <property type="match status" value="1"/>
</dbReference>
<dbReference type="PROSITE" id="PS00050">
    <property type="entry name" value="RIBOSOMAL_L23"/>
    <property type="match status" value="1"/>
</dbReference>
<accession>A8AZM3</accession>
<organism>
    <name type="scientific">Streptococcus gordonii (strain Challis / ATCC 35105 / BCRC 15272 / CH1 / DL1 / V288)</name>
    <dbReference type="NCBI Taxonomy" id="467705"/>
    <lineage>
        <taxon>Bacteria</taxon>
        <taxon>Bacillati</taxon>
        <taxon>Bacillota</taxon>
        <taxon>Bacilli</taxon>
        <taxon>Lactobacillales</taxon>
        <taxon>Streptococcaceae</taxon>
        <taxon>Streptococcus</taxon>
    </lineage>
</organism>
<keyword id="KW-1185">Reference proteome</keyword>
<keyword id="KW-0687">Ribonucleoprotein</keyword>
<keyword id="KW-0689">Ribosomal protein</keyword>
<keyword id="KW-0694">RNA-binding</keyword>
<keyword id="KW-0699">rRNA-binding</keyword>
<feature type="chain" id="PRO_1000087235" description="Large ribosomal subunit protein uL23">
    <location>
        <begin position="1"/>
        <end position="98"/>
    </location>
</feature>
<protein>
    <recommendedName>
        <fullName evidence="1">Large ribosomal subunit protein uL23</fullName>
    </recommendedName>
    <alternativeName>
        <fullName evidence="2">50S ribosomal protein L23</fullName>
    </alternativeName>
</protein>
<name>RL23_STRGC</name>
<reference key="1">
    <citation type="journal article" date="2007" name="J. Bacteriol.">
        <title>Genome-wide transcriptional changes in Streptococcus gordonii in response to competence signaling peptide.</title>
        <authorList>
            <person name="Vickerman M.M."/>
            <person name="Iobst S."/>
            <person name="Jesionowski A.M."/>
            <person name="Gill S.R."/>
        </authorList>
    </citation>
    <scope>NUCLEOTIDE SEQUENCE [LARGE SCALE GENOMIC DNA]</scope>
    <source>
        <strain>Challis / ATCC 35105 / BCRC 15272 / CH1 / DL1 / V288</strain>
    </source>
</reference>